<accession>A8T6P4</accession>
<protein>
    <recommendedName>
        <fullName>Rab effector MyRIP</fullName>
    </recommendedName>
    <alternativeName>
        <fullName>Exophilin-8</fullName>
    </alternativeName>
    <alternativeName>
        <fullName>Myosin VIIa- and Rab-interacting protein</fullName>
    </alternativeName>
    <alternativeName>
        <fullName>Synaptotagmin-like protein lacking C2 domains C</fullName>
        <shortName>SlaC2-c</shortName>
        <shortName>Slp homolog lacking C2 domains c</shortName>
    </alternativeName>
</protein>
<proteinExistence type="evidence at protein level"/>
<gene>
    <name type="primary">myrip</name>
    <name type="synonym">akap2</name>
    <name type="ORF">si:dkey-12l12.1</name>
    <name type="ORF">si:dkey-189e1.3</name>
</gene>
<organism>
    <name type="scientific">Danio rerio</name>
    <name type="common">Zebrafish</name>
    <name type="synonym">Brachydanio rerio</name>
    <dbReference type="NCBI Taxonomy" id="7955"/>
    <lineage>
        <taxon>Eukaryota</taxon>
        <taxon>Metazoa</taxon>
        <taxon>Chordata</taxon>
        <taxon>Craniata</taxon>
        <taxon>Vertebrata</taxon>
        <taxon>Euteleostomi</taxon>
        <taxon>Actinopterygii</taxon>
        <taxon>Neopterygii</taxon>
        <taxon>Teleostei</taxon>
        <taxon>Ostariophysi</taxon>
        <taxon>Cypriniformes</taxon>
        <taxon>Danionidae</taxon>
        <taxon>Danioninae</taxon>
        <taxon>Danio</taxon>
    </lineage>
</organism>
<dbReference type="EMBL" id="EF694835">
    <property type="protein sequence ID" value="ABV53439.1"/>
    <property type="molecule type" value="mRNA"/>
</dbReference>
<dbReference type="EMBL" id="BX005057">
    <property type="status" value="NOT_ANNOTATED_CDS"/>
    <property type="molecule type" value="Genomic_DNA"/>
</dbReference>
<dbReference type="EMBL" id="CR753886">
    <property type="status" value="NOT_ANNOTATED_CDS"/>
    <property type="molecule type" value="Genomic_DNA"/>
</dbReference>
<dbReference type="SMR" id="A8T6P4"/>
<dbReference type="FunCoup" id="A8T6P4">
    <property type="interactions" value="1068"/>
</dbReference>
<dbReference type="STRING" id="7955.ENSDARP00000149872"/>
<dbReference type="PaxDb" id="7955-ENSDARP00000099429"/>
<dbReference type="AGR" id="ZFIN:ZDB-GENE-080123-1"/>
<dbReference type="ZFIN" id="ZDB-GENE-080123-1">
    <property type="gene designation" value="myripb"/>
</dbReference>
<dbReference type="eggNOG" id="ENOG502QPUS">
    <property type="taxonomic scope" value="Eukaryota"/>
</dbReference>
<dbReference type="HOGENOM" id="CLU_008568_0_0_1"/>
<dbReference type="InParanoid" id="A8T6P4"/>
<dbReference type="PhylomeDB" id="A8T6P4"/>
<dbReference type="ChiTaRS" id="si:dkey-12l12.1">
    <property type="organism name" value="zebrafish"/>
</dbReference>
<dbReference type="PRO" id="PR:A8T6P4"/>
<dbReference type="Proteomes" id="UP000000437">
    <property type="component" value="Unplaced"/>
</dbReference>
<dbReference type="GO" id="GO:0030864">
    <property type="term" value="C:cortical actin cytoskeleton"/>
    <property type="evidence" value="ECO:0000318"/>
    <property type="project" value="GO_Central"/>
</dbReference>
<dbReference type="GO" id="GO:0048471">
    <property type="term" value="C:perinuclear region of cytoplasm"/>
    <property type="evidence" value="ECO:0007669"/>
    <property type="project" value="UniProtKB-SubCell"/>
</dbReference>
<dbReference type="GO" id="GO:0030133">
    <property type="term" value="C:transport vesicle"/>
    <property type="evidence" value="ECO:0007669"/>
    <property type="project" value="UniProtKB-SubCell"/>
</dbReference>
<dbReference type="GO" id="GO:0003779">
    <property type="term" value="F:actin binding"/>
    <property type="evidence" value="ECO:0000318"/>
    <property type="project" value="GO_Central"/>
</dbReference>
<dbReference type="GO" id="GO:0017022">
    <property type="term" value="F:myosin binding"/>
    <property type="evidence" value="ECO:0000318"/>
    <property type="project" value="GO_Central"/>
</dbReference>
<dbReference type="GO" id="GO:0031267">
    <property type="term" value="F:small GTPase binding"/>
    <property type="evidence" value="ECO:0007669"/>
    <property type="project" value="InterPro"/>
</dbReference>
<dbReference type="GO" id="GO:0008270">
    <property type="term" value="F:zinc ion binding"/>
    <property type="evidence" value="ECO:0007669"/>
    <property type="project" value="UniProtKB-KW"/>
</dbReference>
<dbReference type="GO" id="GO:0006886">
    <property type="term" value="P:intracellular protein transport"/>
    <property type="evidence" value="ECO:0007669"/>
    <property type="project" value="InterPro"/>
</dbReference>
<dbReference type="CDD" id="cd15753">
    <property type="entry name" value="FYVE_SlaC2-c"/>
    <property type="match status" value="1"/>
</dbReference>
<dbReference type="FunFam" id="3.30.40.10:FF:000018">
    <property type="entry name" value="Synaptotagmin-like 5, isoform CRA_a"/>
    <property type="match status" value="1"/>
</dbReference>
<dbReference type="Gene3D" id="3.30.40.10">
    <property type="entry name" value="Zinc/RING finger domain, C3HC4 (zinc finger)"/>
    <property type="match status" value="1"/>
</dbReference>
<dbReference type="InterPro" id="IPR041282">
    <property type="entry name" value="FYVE_2"/>
</dbReference>
<dbReference type="InterPro" id="IPR051745">
    <property type="entry name" value="Intracell_Transport_Effector"/>
</dbReference>
<dbReference type="InterPro" id="IPR006788">
    <property type="entry name" value="Myrip/Melanophilin"/>
</dbReference>
<dbReference type="InterPro" id="IPR010911">
    <property type="entry name" value="Rab_BD"/>
</dbReference>
<dbReference type="InterPro" id="IPR011011">
    <property type="entry name" value="Znf_FYVE_PHD"/>
</dbReference>
<dbReference type="InterPro" id="IPR013083">
    <property type="entry name" value="Znf_RING/FYVE/PHD"/>
</dbReference>
<dbReference type="PANTHER" id="PTHR14555">
    <property type="entry name" value="MYELIN-ASSOCIATED OLIGODENDROCYTIC BASIC PROTEIN MOBP -RELATED"/>
    <property type="match status" value="1"/>
</dbReference>
<dbReference type="PANTHER" id="PTHR14555:SF6">
    <property type="entry name" value="RAB EFFECTOR MYRIP"/>
    <property type="match status" value="1"/>
</dbReference>
<dbReference type="Pfam" id="PF02318">
    <property type="entry name" value="FYVE_2"/>
    <property type="match status" value="1"/>
</dbReference>
<dbReference type="Pfam" id="PF04698">
    <property type="entry name" value="Rab_eff_C"/>
    <property type="match status" value="1"/>
</dbReference>
<dbReference type="SUPFAM" id="SSF57903">
    <property type="entry name" value="FYVE/PHD zinc finger"/>
    <property type="match status" value="1"/>
</dbReference>
<dbReference type="PROSITE" id="PS50916">
    <property type="entry name" value="RABBD"/>
    <property type="match status" value="1"/>
</dbReference>
<sequence length="838" mass="96250">MGRKLDLSGLSNNEAEHVLRVVQRDMQLRKKEEERLSEMKQELEEEGSRCLLLSKQQKFNEHCCIRCCSPFTFLLNPKRQCLDCHYNICKSCCSYSQSERGYICAACQKSRHLRTQSLEWFYNNVKSRFKRFGSAKVLKTLYRKHIIERGALSELPEVSAHEGSNDNGSICDGSDSTLYKQSEGHSMADTLTVALRVAEEAIEEAIAKAENYKDSLEKQNEARYLHEHKEELIEELATTIVQKIIQRGKRPEIQEEYEFVWPQNQKSELPSPTSTQNPLATQNSHSTSQPGAVAQSDISKRSRSAYSSDDSPEKGPEVGMAPGVPKSTEVETDIQNYSSLRRESRALSLPGWKSVDRLENSSASSVLQSPDGNWIALQSSQHSRPSLLTKRKSLVFSVLEKESGVVSAYDEMGSDSDPEDQGGWGAALLQFRRRLSDETYYTDSQHDPEWTFTQHPPITSPSSGQYTNTETLNSDSETSPSPSTRARRAPVMKKGPPETHLYPYYRHPADIVALPQLKPDVLDVNFNPHLGGDSSDGEERSEQVKRSRRRRKSKRETSEHSRAHNALYSAATAENSTVLLNAMMMRRQQSQENTVPLNHQTPDSVTSPDILTFNNMSPEPEYQNTLAHNSSAASLPLLSQLGSNNPGFAPQDPLLRAFPVNETLEEELKYKLSELIGQVSERDVKSSDFEPISEVGNKQEDRVSEKDSGKLRPKERRESKRESKLREMEKQSERQTVKLMDTSDAVRQINIERQMKKERERQRDIERQVERERERQRELEKQIEKDRERRREIEMQVEKKQERQKEMEKQLKQEQERQSEIERDLEKKRKSIRMEKRN</sequence>
<evidence type="ECO:0000250" key="1"/>
<evidence type="ECO:0000250" key="2">
    <source>
        <dbReference type="UniProtKB" id="Q7TNY7"/>
    </source>
</evidence>
<evidence type="ECO:0000250" key="3">
    <source>
        <dbReference type="UniProtKB" id="Q8K3I4"/>
    </source>
</evidence>
<evidence type="ECO:0000255" key="4"/>
<evidence type="ECO:0000255" key="5">
    <source>
        <dbReference type="PROSITE-ProRule" id="PRU00234"/>
    </source>
</evidence>
<evidence type="ECO:0000256" key="6">
    <source>
        <dbReference type="SAM" id="MobiDB-lite"/>
    </source>
</evidence>
<evidence type="ECO:0000269" key="7">
    <source>
    </source>
</evidence>
<name>MYRIP_DANRE</name>
<comment type="function">
    <text evidence="1">May link secretory vesicles to actin filaments (By similarity). May function as a protein kinase A-anchoring protein (AKAP). May act as a scaffolding protein that links PKA to components of the exocytosis machinery, thus facilitating exocytosis (By similarity).</text>
</comment>
<comment type="subunit">
    <text evidence="7">Interacts with prkar2aa.</text>
</comment>
<comment type="subcellular location">
    <subcellularLocation>
        <location evidence="3">Cytoplasm</location>
    </subcellularLocation>
    <subcellularLocation>
        <location evidence="2">Cytoplasm</location>
        <location evidence="2">Perinuclear region</location>
    </subcellularLocation>
    <subcellularLocation>
        <location evidence="2">Cytoplasmic vesicle</location>
        <location evidence="2">Secretory vesicle</location>
    </subcellularLocation>
</comment>
<keyword id="KW-0175">Coiled coil</keyword>
<keyword id="KW-0963">Cytoplasm</keyword>
<keyword id="KW-0968">Cytoplasmic vesicle</keyword>
<keyword id="KW-0479">Metal-binding</keyword>
<keyword id="KW-1185">Reference proteome</keyword>
<keyword id="KW-0862">Zinc</keyword>
<keyword id="KW-0863">Zinc-finger</keyword>
<feature type="chain" id="PRO_0000417354" description="Rab effector MyRIP">
    <location>
        <begin position="1"/>
        <end position="838"/>
    </location>
</feature>
<feature type="domain" description="RabBD" evidence="5">
    <location>
        <begin position="4"/>
        <end position="124"/>
    </location>
</feature>
<feature type="zinc finger region" description="FYVE-type">
    <location>
        <begin position="58"/>
        <end position="112"/>
    </location>
</feature>
<feature type="region of interest" description="Disordered" evidence="6">
    <location>
        <begin position="263"/>
        <end position="331"/>
    </location>
</feature>
<feature type="region of interest" description="Disordered" evidence="6">
    <location>
        <begin position="444"/>
        <end position="501"/>
    </location>
</feature>
<feature type="region of interest" description="Disordered" evidence="6">
    <location>
        <begin position="525"/>
        <end position="570"/>
    </location>
</feature>
<feature type="region of interest" description="Disordered" evidence="6">
    <location>
        <begin position="681"/>
        <end position="838"/>
    </location>
</feature>
<feature type="coiled-coil region" evidence="4">
    <location>
        <begin position="188"/>
        <end position="237"/>
    </location>
</feature>
<feature type="coiled-coil region" evidence="4">
    <location>
        <begin position="714"/>
        <end position="833"/>
    </location>
</feature>
<feature type="compositionally biased region" description="Polar residues" evidence="6">
    <location>
        <begin position="263"/>
        <end position="290"/>
    </location>
</feature>
<feature type="compositionally biased region" description="Polar residues" evidence="6">
    <location>
        <begin position="451"/>
        <end position="484"/>
    </location>
</feature>
<feature type="compositionally biased region" description="Basic and acidic residues" evidence="6">
    <location>
        <begin position="697"/>
        <end position="736"/>
    </location>
</feature>
<feature type="compositionally biased region" description="Basic and acidic residues" evidence="6">
    <location>
        <begin position="753"/>
        <end position="838"/>
    </location>
</feature>
<reference key="1">
    <citation type="journal article" date="2007" name="J. Biol. Chem.">
        <title>MyRIP anchors protein kinase A to the exocyst complex.</title>
        <authorList>
            <person name="Goehring A.S."/>
            <person name="Pedroja B.S."/>
            <person name="Hinke S.A."/>
            <person name="Langeberg L.K."/>
            <person name="Scott J.D."/>
        </authorList>
    </citation>
    <scope>NUCLEOTIDE SEQUENCE [MRNA]</scope>
    <scope>INTERACTION WITH PRKAR2AA</scope>
    <source>
        <tissue>Embryo</tissue>
    </source>
</reference>
<reference key="2">
    <citation type="journal article" date="2013" name="Nature">
        <title>The zebrafish reference genome sequence and its relationship to the human genome.</title>
        <authorList>
            <person name="Howe K."/>
            <person name="Clark M.D."/>
            <person name="Torroja C.F."/>
            <person name="Torrance J."/>
            <person name="Berthelot C."/>
            <person name="Muffato M."/>
            <person name="Collins J.E."/>
            <person name="Humphray S."/>
            <person name="McLaren K."/>
            <person name="Matthews L."/>
            <person name="McLaren S."/>
            <person name="Sealy I."/>
            <person name="Caccamo M."/>
            <person name="Churcher C."/>
            <person name="Scott C."/>
            <person name="Barrett J.C."/>
            <person name="Koch R."/>
            <person name="Rauch G.J."/>
            <person name="White S."/>
            <person name="Chow W."/>
            <person name="Kilian B."/>
            <person name="Quintais L.T."/>
            <person name="Guerra-Assuncao J.A."/>
            <person name="Zhou Y."/>
            <person name="Gu Y."/>
            <person name="Yen J."/>
            <person name="Vogel J.H."/>
            <person name="Eyre T."/>
            <person name="Redmond S."/>
            <person name="Banerjee R."/>
            <person name="Chi J."/>
            <person name="Fu B."/>
            <person name="Langley E."/>
            <person name="Maguire S.F."/>
            <person name="Laird G.K."/>
            <person name="Lloyd D."/>
            <person name="Kenyon E."/>
            <person name="Donaldson S."/>
            <person name="Sehra H."/>
            <person name="Almeida-King J."/>
            <person name="Loveland J."/>
            <person name="Trevanion S."/>
            <person name="Jones M."/>
            <person name="Quail M."/>
            <person name="Willey D."/>
            <person name="Hunt A."/>
            <person name="Burton J."/>
            <person name="Sims S."/>
            <person name="McLay K."/>
            <person name="Plumb B."/>
            <person name="Davis J."/>
            <person name="Clee C."/>
            <person name="Oliver K."/>
            <person name="Clark R."/>
            <person name="Riddle C."/>
            <person name="Elliot D."/>
            <person name="Threadgold G."/>
            <person name="Harden G."/>
            <person name="Ware D."/>
            <person name="Begum S."/>
            <person name="Mortimore B."/>
            <person name="Kerry G."/>
            <person name="Heath P."/>
            <person name="Phillimore B."/>
            <person name="Tracey A."/>
            <person name="Corby N."/>
            <person name="Dunn M."/>
            <person name="Johnson C."/>
            <person name="Wood J."/>
            <person name="Clark S."/>
            <person name="Pelan S."/>
            <person name="Griffiths G."/>
            <person name="Smith M."/>
            <person name="Glithero R."/>
            <person name="Howden P."/>
            <person name="Barker N."/>
            <person name="Lloyd C."/>
            <person name="Stevens C."/>
            <person name="Harley J."/>
            <person name="Holt K."/>
            <person name="Panagiotidis G."/>
            <person name="Lovell J."/>
            <person name="Beasley H."/>
            <person name="Henderson C."/>
            <person name="Gordon D."/>
            <person name="Auger K."/>
            <person name="Wright D."/>
            <person name="Collins J."/>
            <person name="Raisen C."/>
            <person name="Dyer L."/>
            <person name="Leung K."/>
            <person name="Robertson L."/>
            <person name="Ambridge K."/>
            <person name="Leongamornlert D."/>
            <person name="McGuire S."/>
            <person name="Gilderthorp R."/>
            <person name="Griffiths C."/>
            <person name="Manthravadi D."/>
            <person name="Nichol S."/>
            <person name="Barker G."/>
            <person name="Whitehead S."/>
            <person name="Kay M."/>
            <person name="Brown J."/>
            <person name="Murnane C."/>
            <person name="Gray E."/>
            <person name="Humphries M."/>
            <person name="Sycamore N."/>
            <person name="Barker D."/>
            <person name="Saunders D."/>
            <person name="Wallis J."/>
            <person name="Babbage A."/>
            <person name="Hammond S."/>
            <person name="Mashreghi-Mohammadi M."/>
            <person name="Barr L."/>
            <person name="Martin S."/>
            <person name="Wray P."/>
            <person name="Ellington A."/>
            <person name="Matthews N."/>
            <person name="Ellwood M."/>
            <person name="Woodmansey R."/>
            <person name="Clark G."/>
            <person name="Cooper J."/>
            <person name="Tromans A."/>
            <person name="Grafham D."/>
            <person name="Skuce C."/>
            <person name="Pandian R."/>
            <person name="Andrews R."/>
            <person name="Harrison E."/>
            <person name="Kimberley A."/>
            <person name="Garnett J."/>
            <person name="Fosker N."/>
            <person name="Hall R."/>
            <person name="Garner P."/>
            <person name="Kelly D."/>
            <person name="Bird C."/>
            <person name="Palmer S."/>
            <person name="Gehring I."/>
            <person name="Berger A."/>
            <person name="Dooley C.M."/>
            <person name="Ersan-Urun Z."/>
            <person name="Eser C."/>
            <person name="Geiger H."/>
            <person name="Geisler M."/>
            <person name="Karotki L."/>
            <person name="Kirn A."/>
            <person name="Konantz J."/>
            <person name="Konantz M."/>
            <person name="Oberlander M."/>
            <person name="Rudolph-Geiger S."/>
            <person name="Teucke M."/>
            <person name="Lanz C."/>
            <person name="Raddatz G."/>
            <person name="Osoegawa K."/>
            <person name="Zhu B."/>
            <person name="Rapp A."/>
            <person name="Widaa S."/>
            <person name="Langford C."/>
            <person name="Yang F."/>
            <person name="Schuster S.C."/>
            <person name="Carter N.P."/>
            <person name="Harrow J."/>
            <person name="Ning Z."/>
            <person name="Herrero J."/>
            <person name="Searle S.M."/>
            <person name="Enright A."/>
            <person name="Geisler R."/>
            <person name="Plasterk R.H."/>
            <person name="Lee C."/>
            <person name="Westerfield M."/>
            <person name="de Jong P.J."/>
            <person name="Zon L.I."/>
            <person name="Postlethwait J.H."/>
            <person name="Nusslein-Volhard C."/>
            <person name="Hubbard T.J."/>
            <person name="Roest Crollius H."/>
            <person name="Rogers J."/>
            <person name="Stemple D.L."/>
        </authorList>
    </citation>
    <scope>NUCLEOTIDE SEQUENCE [LARGE SCALE GENOMIC DNA]</scope>
    <source>
        <strain>Tuebingen</strain>
    </source>
</reference>